<name>NDK_ERYLH</name>
<organism>
    <name type="scientific">Erythrobacter litoralis (strain HTCC2594)</name>
    <dbReference type="NCBI Taxonomy" id="314225"/>
    <lineage>
        <taxon>Bacteria</taxon>
        <taxon>Pseudomonadati</taxon>
        <taxon>Pseudomonadota</taxon>
        <taxon>Alphaproteobacteria</taxon>
        <taxon>Sphingomonadales</taxon>
        <taxon>Erythrobacteraceae</taxon>
        <taxon>Erythrobacter/Porphyrobacter group</taxon>
        <taxon>Erythrobacter</taxon>
    </lineage>
</organism>
<gene>
    <name evidence="1" type="primary">ndk</name>
    <name type="ordered locus">ELI_08860</name>
</gene>
<sequence length="140" mass="15587">MAVTRTFSIIKPDATKRNLTGAVTKMLEEAGLRVVASKRIRMSREQAEGFYAVHKERPFFGELVDFMMSEPVVVQVLEGEDAVKRNRDVMGATNPAEAAEGTIRKEYALSIGENTVHGSDSEENAKIEIDFFFDEDEIVG</sequence>
<feature type="chain" id="PRO_1000026233" description="Nucleoside diphosphate kinase">
    <location>
        <begin position="1"/>
        <end position="140"/>
    </location>
</feature>
<feature type="active site" description="Pros-phosphohistidine intermediate" evidence="1">
    <location>
        <position position="117"/>
    </location>
</feature>
<feature type="binding site" evidence="1">
    <location>
        <position position="11"/>
    </location>
    <ligand>
        <name>ATP</name>
        <dbReference type="ChEBI" id="CHEBI:30616"/>
    </ligand>
</feature>
<feature type="binding site" evidence="1">
    <location>
        <position position="59"/>
    </location>
    <ligand>
        <name>ATP</name>
        <dbReference type="ChEBI" id="CHEBI:30616"/>
    </ligand>
</feature>
<feature type="binding site" evidence="1">
    <location>
        <position position="87"/>
    </location>
    <ligand>
        <name>ATP</name>
        <dbReference type="ChEBI" id="CHEBI:30616"/>
    </ligand>
</feature>
<feature type="binding site" evidence="1">
    <location>
        <position position="93"/>
    </location>
    <ligand>
        <name>ATP</name>
        <dbReference type="ChEBI" id="CHEBI:30616"/>
    </ligand>
</feature>
<feature type="binding site" evidence="1">
    <location>
        <position position="104"/>
    </location>
    <ligand>
        <name>ATP</name>
        <dbReference type="ChEBI" id="CHEBI:30616"/>
    </ligand>
</feature>
<feature type="binding site" evidence="1">
    <location>
        <position position="114"/>
    </location>
    <ligand>
        <name>ATP</name>
        <dbReference type="ChEBI" id="CHEBI:30616"/>
    </ligand>
</feature>
<protein>
    <recommendedName>
        <fullName evidence="1">Nucleoside diphosphate kinase</fullName>
        <shortName evidence="1">NDK</shortName>
        <shortName evidence="1">NDP kinase</shortName>
        <ecNumber evidence="1">2.7.4.6</ecNumber>
    </recommendedName>
    <alternativeName>
        <fullName evidence="1">Nucleoside-2-P kinase</fullName>
    </alternativeName>
</protein>
<reference key="1">
    <citation type="journal article" date="2009" name="J. Bacteriol.">
        <title>Complete genome sequence of Erythrobacter litoralis HTCC2594.</title>
        <authorList>
            <person name="Oh H.M."/>
            <person name="Giovannoni S.J."/>
            <person name="Ferriera S."/>
            <person name="Johnson J."/>
            <person name="Cho J.C."/>
        </authorList>
    </citation>
    <scope>NUCLEOTIDE SEQUENCE [LARGE SCALE GENOMIC DNA]</scope>
    <source>
        <strain>HTCC2594</strain>
    </source>
</reference>
<evidence type="ECO:0000255" key="1">
    <source>
        <dbReference type="HAMAP-Rule" id="MF_00451"/>
    </source>
</evidence>
<dbReference type="EC" id="2.7.4.6" evidence="1"/>
<dbReference type="EMBL" id="CP000157">
    <property type="protein sequence ID" value="ABC63864.1"/>
    <property type="molecule type" value="Genomic_DNA"/>
</dbReference>
<dbReference type="RefSeq" id="WP_011414694.1">
    <property type="nucleotide sequence ID" value="NC_007722.1"/>
</dbReference>
<dbReference type="SMR" id="Q2N8X7"/>
<dbReference type="STRING" id="314225.ELI_08860"/>
<dbReference type="KEGG" id="eli:ELI_08860"/>
<dbReference type="eggNOG" id="COG0105">
    <property type="taxonomic scope" value="Bacteria"/>
</dbReference>
<dbReference type="HOGENOM" id="CLU_060216_8_1_5"/>
<dbReference type="OrthoDB" id="9801161at2"/>
<dbReference type="Proteomes" id="UP000008808">
    <property type="component" value="Chromosome"/>
</dbReference>
<dbReference type="GO" id="GO:0005737">
    <property type="term" value="C:cytoplasm"/>
    <property type="evidence" value="ECO:0007669"/>
    <property type="project" value="UniProtKB-SubCell"/>
</dbReference>
<dbReference type="GO" id="GO:0005524">
    <property type="term" value="F:ATP binding"/>
    <property type="evidence" value="ECO:0007669"/>
    <property type="project" value="UniProtKB-UniRule"/>
</dbReference>
<dbReference type="GO" id="GO:0046872">
    <property type="term" value="F:metal ion binding"/>
    <property type="evidence" value="ECO:0007669"/>
    <property type="project" value="UniProtKB-KW"/>
</dbReference>
<dbReference type="GO" id="GO:0004550">
    <property type="term" value="F:nucleoside diphosphate kinase activity"/>
    <property type="evidence" value="ECO:0007669"/>
    <property type="project" value="UniProtKB-UniRule"/>
</dbReference>
<dbReference type="GO" id="GO:0006241">
    <property type="term" value="P:CTP biosynthetic process"/>
    <property type="evidence" value="ECO:0007669"/>
    <property type="project" value="UniProtKB-UniRule"/>
</dbReference>
<dbReference type="GO" id="GO:0006183">
    <property type="term" value="P:GTP biosynthetic process"/>
    <property type="evidence" value="ECO:0007669"/>
    <property type="project" value="UniProtKB-UniRule"/>
</dbReference>
<dbReference type="GO" id="GO:0006228">
    <property type="term" value="P:UTP biosynthetic process"/>
    <property type="evidence" value="ECO:0007669"/>
    <property type="project" value="UniProtKB-UniRule"/>
</dbReference>
<dbReference type="CDD" id="cd04413">
    <property type="entry name" value="NDPk_I"/>
    <property type="match status" value="1"/>
</dbReference>
<dbReference type="FunFam" id="3.30.70.141:FF:000001">
    <property type="entry name" value="Nucleoside diphosphate kinase"/>
    <property type="match status" value="1"/>
</dbReference>
<dbReference type="Gene3D" id="3.30.70.141">
    <property type="entry name" value="Nucleoside diphosphate kinase-like domain"/>
    <property type="match status" value="1"/>
</dbReference>
<dbReference type="HAMAP" id="MF_00451">
    <property type="entry name" value="NDP_kinase"/>
    <property type="match status" value="1"/>
</dbReference>
<dbReference type="InterPro" id="IPR034907">
    <property type="entry name" value="NDK-like_dom"/>
</dbReference>
<dbReference type="InterPro" id="IPR036850">
    <property type="entry name" value="NDK-like_dom_sf"/>
</dbReference>
<dbReference type="InterPro" id="IPR001564">
    <property type="entry name" value="Nucleoside_diP_kinase"/>
</dbReference>
<dbReference type="InterPro" id="IPR023005">
    <property type="entry name" value="Nucleoside_diP_kinase_AS"/>
</dbReference>
<dbReference type="NCBIfam" id="NF001908">
    <property type="entry name" value="PRK00668.1"/>
    <property type="match status" value="1"/>
</dbReference>
<dbReference type="PANTHER" id="PTHR11349">
    <property type="entry name" value="NUCLEOSIDE DIPHOSPHATE KINASE"/>
    <property type="match status" value="1"/>
</dbReference>
<dbReference type="Pfam" id="PF00334">
    <property type="entry name" value="NDK"/>
    <property type="match status" value="1"/>
</dbReference>
<dbReference type="PRINTS" id="PR01243">
    <property type="entry name" value="NUCDPKINASE"/>
</dbReference>
<dbReference type="SMART" id="SM00562">
    <property type="entry name" value="NDK"/>
    <property type="match status" value="1"/>
</dbReference>
<dbReference type="SUPFAM" id="SSF54919">
    <property type="entry name" value="Nucleoside diphosphate kinase, NDK"/>
    <property type="match status" value="1"/>
</dbReference>
<dbReference type="PROSITE" id="PS00469">
    <property type="entry name" value="NDPK"/>
    <property type="match status" value="1"/>
</dbReference>
<dbReference type="PROSITE" id="PS51374">
    <property type="entry name" value="NDPK_LIKE"/>
    <property type="match status" value="1"/>
</dbReference>
<proteinExistence type="inferred from homology"/>
<comment type="function">
    <text evidence="1">Major role in the synthesis of nucleoside triphosphates other than ATP. The ATP gamma phosphate is transferred to the NDP beta phosphate via a ping-pong mechanism, using a phosphorylated active-site intermediate.</text>
</comment>
<comment type="catalytic activity">
    <reaction evidence="1">
        <text>a 2'-deoxyribonucleoside 5'-diphosphate + ATP = a 2'-deoxyribonucleoside 5'-triphosphate + ADP</text>
        <dbReference type="Rhea" id="RHEA:44640"/>
        <dbReference type="ChEBI" id="CHEBI:30616"/>
        <dbReference type="ChEBI" id="CHEBI:61560"/>
        <dbReference type="ChEBI" id="CHEBI:73316"/>
        <dbReference type="ChEBI" id="CHEBI:456216"/>
        <dbReference type="EC" id="2.7.4.6"/>
    </reaction>
</comment>
<comment type="catalytic activity">
    <reaction evidence="1">
        <text>a ribonucleoside 5'-diphosphate + ATP = a ribonucleoside 5'-triphosphate + ADP</text>
        <dbReference type="Rhea" id="RHEA:18113"/>
        <dbReference type="ChEBI" id="CHEBI:30616"/>
        <dbReference type="ChEBI" id="CHEBI:57930"/>
        <dbReference type="ChEBI" id="CHEBI:61557"/>
        <dbReference type="ChEBI" id="CHEBI:456216"/>
        <dbReference type="EC" id="2.7.4.6"/>
    </reaction>
</comment>
<comment type="cofactor">
    <cofactor evidence="1">
        <name>Mg(2+)</name>
        <dbReference type="ChEBI" id="CHEBI:18420"/>
    </cofactor>
</comment>
<comment type="subunit">
    <text evidence="1">Homotetramer.</text>
</comment>
<comment type="subcellular location">
    <subcellularLocation>
        <location evidence="1">Cytoplasm</location>
    </subcellularLocation>
</comment>
<comment type="similarity">
    <text evidence="1">Belongs to the NDK family.</text>
</comment>
<keyword id="KW-0067">ATP-binding</keyword>
<keyword id="KW-0963">Cytoplasm</keyword>
<keyword id="KW-0418">Kinase</keyword>
<keyword id="KW-0460">Magnesium</keyword>
<keyword id="KW-0479">Metal-binding</keyword>
<keyword id="KW-0546">Nucleotide metabolism</keyword>
<keyword id="KW-0547">Nucleotide-binding</keyword>
<keyword id="KW-0597">Phosphoprotein</keyword>
<keyword id="KW-1185">Reference proteome</keyword>
<keyword id="KW-0808">Transferase</keyword>
<accession>Q2N8X7</accession>